<name>AGUA_YERP3</name>
<keyword id="KW-0378">Hydrolase</keyword>
<comment type="catalytic activity">
    <reaction evidence="1">
        <text>agmatine + H2O = N-carbamoylputrescine + NH4(+)</text>
        <dbReference type="Rhea" id="RHEA:18037"/>
        <dbReference type="ChEBI" id="CHEBI:15377"/>
        <dbReference type="ChEBI" id="CHEBI:28938"/>
        <dbReference type="ChEBI" id="CHEBI:58145"/>
        <dbReference type="ChEBI" id="CHEBI:58318"/>
        <dbReference type="EC" id="3.5.3.12"/>
    </reaction>
</comment>
<comment type="similarity">
    <text evidence="1">Belongs to the agmatine deiminase family.</text>
</comment>
<reference key="1">
    <citation type="journal article" date="2007" name="PLoS Genet.">
        <title>The complete genome sequence of Yersinia pseudotuberculosis IP31758, the causative agent of Far East scarlet-like fever.</title>
        <authorList>
            <person name="Eppinger M."/>
            <person name="Rosovitz M.J."/>
            <person name="Fricke W.F."/>
            <person name="Rasko D.A."/>
            <person name="Kokorina G."/>
            <person name="Fayolle C."/>
            <person name="Lindler L.E."/>
            <person name="Carniel E."/>
            <person name="Ravel J."/>
        </authorList>
    </citation>
    <scope>NUCLEOTIDE SEQUENCE [LARGE SCALE GENOMIC DNA]</scope>
    <source>
        <strain>IP 31758</strain>
    </source>
</reference>
<evidence type="ECO:0000255" key="1">
    <source>
        <dbReference type="HAMAP-Rule" id="MF_01841"/>
    </source>
</evidence>
<organism>
    <name type="scientific">Yersinia pseudotuberculosis serotype O:1b (strain IP 31758)</name>
    <dbReference type="NCBI Taxonomy" id="349747"/>
    <lineage>
        <taxon>Bacteria</taxon>
        <taxon>Pseudomonadati</taxon>
        <taxon>Pseudomonadota</taxon>
        <taxon>Gammaproteobacteria</taxon>
        <taxon>Enterobacterales</taxon>
        <taxon>Yersiniaceae</taxon>
        <taxon>Yersinia</taxon>
    </lineage>
</organism>
<protein>
    <recommendedName>
        <fullName evidence="1">Putative agmatine deiminase</fullName>
        <ecNumber evidence="1">3.5.3.12</ecNumber>
    </recommendedName>
    <alternativeName>
        <fullName evidence="1">Agmatine iminohydrolase</fullName>
    </alternativeName>
</protein>
<accession>A7FEY8</accession>
<dbReference type="EC" id="3.5.3.12" evidence="1"/>
<dbReference type="EMBL" id="CP000720">
    <property type="protein sequence ID" value="ABS47051.1"/>
    <property type="molecule type" value="Genomic_DNA"/>
</dbReference>
<dbReference type="SMR" id="A7FEY8"/>
<dbReference type="KEGG" id="ypi:YpsIP31758_0832"/>
<dbReference type="HOGENOM" id="CLU_037682_1_0_6"/>
<dbReference type="Proteomes" id="UP000002412">
    <property type="component" value="Chromosome"/>
</dbReference>
<dbReference type="GO" id="GO:0047632">
    <property type="term" value="F:agmatine deiminase activity"/>
    <property type="evidence" value="ECO:0007669"/>
    <property type="project" value="UniProtKB-UniRule"/>
</dbReference>
<dbReference type="GO" id="GO:0004668">
    <property type="term" value="F:protein-arginine deiminase activity"/>
    <property type="evidence" value="ECO:0007669"/>
    <property type="project" value="InterPro"/>
</dbReference>
<dbReference type="GO" id="GO:0009446">
    <property type="term" value="P:putrescine biosynthetic process"/>
    <property type="evidence" value="ECO:0007669"/>
    <property type="project" value="InterPro"/>
</dbReference>
<dbReference type="Gene3D" id="3.75.10.10">
    <property type="entry name" value="L-arginine/glycine Amidinotransferase, Chain A"/>
    <property type="match status" value="1"/>
</dbReference>
<dbReference type="HAMAP" id="MF_01841">
    <property type="entry name" value="Agmatine_deimin"/>
    <property type="match status" value="1"/>
</dbReference>
<dbReference type="InterPro" id="IPR017754">
    <property type="entry name" value="Agmatine_deiminase"/>
</dbReference>
<dbReference type="InterPro" id="IPR007466">
    <property type="entry name" value="Peptidyl-Arg-deiminase_porph"/>
</dbReference>
<dbReference type="NCBIfam" id="TIGR03380">
    <property type="entry name" value="agmatine_aguA"/>
    <property type="match status" value="1"/>
</dbReference>
<dbReference type="NCBIfam" id="NF010070">
    <property type="entry name" value="PRK13551.1"/>
    <property type="match status" value="1"/>
</dbReference>
<dbReference type="PANTHER" id="PTHR31377">
    <property type="entry name" value="AGMATINE DEIMINASE-RELATED"/>
    <property type="match status" value="1"/>
</dbReference>
<dbReference type="PANTHER" id="PTHR31377:SF0">
    <property type="entry name" value="AGMATINE DEIMINASE-RELATED"/>
    <property type="match status" value="1"/>
</dbReference>
<dbReference type="Pfam" id="PF04371">
    <property type="entry name" value="PAD_porph"/>
    <property type="match status" value="1"/>
</dbReference>
<dbReference type="SUPFAM" id="SSF55909">
    <property type="entry name" value="Pentein"/>
    <property type="match status" value="1"/>
</dbReference>
<feature type="chain" id="PRO_1000070576" description="Putative agmatine deiminase">
    <location>
        <begin position="1"/>
        <end position="365"/>
    </location>
</feature>
<feature type="active site" description="Amidino-cysteine intermediate" evidence="1">
    <location>
        <position position="357"/>
    </location>
</feature>
<gene>
    <name evidence="1" type="primary">aguA</name>
    <name type="ordered locus">YpsIP31758_0832</name>
</gene>
<sequence length="365" mass="40377">MLQQQALPGTPRQDGFFMPAEWAPQDAVWMLWPYRQDNWRGKAIPAQQTFAKVAEAISRATPVFMGVPAEFMAQAKATMPANVTLVEMASDDAWMRDTGPTMVINGAAERRAVDWQFNAWGGLNGGLYADWQQDEKVAVQVSDFLKNAHYSAPLILEGGSIHTDGEGTLLTTAECLLNPNRNPHLNQAQIEQLLCDYLGVTHFIWLQDGVYNDETDGHIDNMCCFVRPGEVALHWTDDQQDPQYARSVAAFEVLSNTVDAKGRKLKIWKLPAPGPLYNTEEETFDVLTSDAVPRTAGERLAGSYVNFLISNQQIIFPLLDSRTDGQANDLLQQMFPGYAIVGVPAREILLGGGNIHCITQQIPAA</sequence>
<proteinExistence type="inferred from homology"/>